<evidence type="ECO:0000250" key="1">
    <source>
        <dbReference type="UniProtKB" id="O75420"/>
    </source>
</evidence>
<evidence type="ECO:0000255" key="2">
    <source>
        <dbReference type="PROSITE-ProRule" id="PRU00101"/>
    </source>
</evidence>
<evidence type="ECO:0000256" key="3">
    <source>
        <dbReference type="SAM" id="MobiDB-lite"/>
    </source>
</evidence>
<evidence type="ECO:0000269" key="4">
    <source>
    </source>
</evidence>
<evidence type="ECO:0000305" key="5"/>
<evidence type="ECO:0007744" key="6">
    <source>
    </source>
</evidence>
<gene>
    <name type="primary">Gigyf1</name>
    <name type="synonym">Kiaa4110</name>
    <name type="synonym">Perq1</name>
</gene>
<organism>
    <name type="scientific">Mus musculus</name>
    <name type="common">Mouse</name>
    <dbReference type="NCBI Taxonomy" id="10090"/>
    <lineage>
        <taxon>Eukaryota</taxon>
        <taxon>Metazoa</taxon>
        <taxon>Chordata</taxon>
        <taxon>Craniata</taxon>
        <taxon>Vertebrata</taxon>
        <taxon>Euteleostomi</taxon>
        <taxon>Mammalia</taxon>
        <taxon>Eutheria</taxon>
        <taxon>Euarchontoglires</taxon>
        <taxon>Glires</taxon>
        <taxon>Rodentia</taxon>
        <taxon>Myomorpha</taxon>
        <taxon>Muroidea</taxon>
        <taxon>Muridae</taxon>
        <taxon>Murinae</taxon>
        <taxon>Mus</taxon>
        <taxon>Mus</taxon>
    </lineage>
</organism>
<feature type="chain" id="PRO_0000058315" description="GRB10-interacting GYF protein 1">
    <location>
        <begin position="1"/>
        <end position="1044"/>
    </location>
</feature>
<feature type="domain" description="GYF" evidence="2">
    <location>
        <begin position="476"/>
        <end position="524"/>
    </location>
</feature>
<feature type="region of interest" description="Disordered" evidence="3">
    <location>
        <begin position="104"/>
        <end position="290"/>
    </location>
</feature>
<feature type="region of interest" description="Disordered" evidence="3">
    <location>
        <begin position="306"/>
        <end position="424"/>
    </location>
</feature>
<feature type="region of interest" description="Disordered" evidence="3">
    <location>
        <begin position="692"/>
        <end position="721"/>
    </location>
</feature>
<feature type="region of interest" description="Disordered" evidence="3">
    <location>
        <begin position="820"/>
        <end position="842"/>
    </location>
</feature>
<feature type="region of interest" description="Disordered" evidence="3">
    <location>
        <begin position="855"/>
        <end position="883"/>
    </location>
</feature>
<feature type="region of interest" description="Disordered" evidence="3">
    <location>
        <begin position="966"/>
        <end position="987"/>
    </location>
</feature>
<feature type="region of interest" description="Disordered" evidence="3">
    <location>
        <begin position="1000"/>
        <end position="1019"/>
    </location>
</feature>
<feature type="region of interest" description="Disordered" evidence="3">
    <location>
        <begin position="1024"/>
        <end position="1044"/>
    </location>
</feature>
<feature type="compositionally biased region" description="Basic and acidic residues" evidence="3">
    <location>
        <begin position="148"/>
        <end position="179"/>
    </location>
</feature>
<feature type="compositionally biased region" description="Basic and acidic residues" evidence="3">
    <location>
        <begin position="186"/>
        <end position="203"/>
    </location>
</feature>
<feature type="compositionally biased region" description="Basic and acidic residues" evidence="3">
    <location>
        <begin position="237"/>
        <end position="265"/>
    </location>
</feature>
<feature type="compositionally biased region" description="Basic and acidic residues" evidence="3">
    <location>
        <begin position="316"/>
        <end position="332"/>
    </location>
</feature>
<feature type="compositionally biased region" description="Acidic residues" evidence="3">
    <location>
        <begin position="333"/>
        <end position="350"/>
    </location>
</feature>
<feature type="compositionally biased region" description="Low complexity" evidence="3">
    <location>
        <begin position="366"/>
        <end position="379"/>
    </location>
</feature>
<feature type="compositionally biased region" description="Basic and acidic residues" evidence="3">
    <location>
        <begin position="389"/>
        <end position="403"/>
    </location>
</feature>
<feature type="compositionally biased region" description="Basic and acidic residues" evidence="3">
    <location>
        <begin position="692"/>
        <end position="706"/>
    </location>
</feature>
<feature type="compositionally biased region" description="Gly residues" evidence="3">
    <location>
        <begin position="829"/>
        <end position="839"/>
    </location>
</feature>
<feature type="compositionally biased region" description="Low complexity" evidence="3">
    <location>
        <begin position="855"/>
        <end position="877"/>
    </location>
</feature>
<feature type="compositionally biased region" description="Low complexity" evidence="3">
    <location>
        <begin position="970"/>
        <end position="984"/>
    </location>
</feature>
<feature type="modified residue" description="Phosphoserine" evidence="6">
    <location>
        <position position="24"/>
    </location>
</feature>
<feature type="modified residue" description="Phosphoserine" evidence="6">
    <location>
        <position position="28"/>
    </location>
</feature>
<feature type="modified residue" description="Phosphoserine" evidence="6">
    <location>
        <position position="137"/>
    </location>
</feature>
<feature type="modified residue" description="Phosphoserine" evidence="1">
    <location>
        <position position="157"/>
    </location>
</feature>
<feature type="modified residue" description="Phosphoserine" evidence="1">
    <location>
        <position position="228"/>
    </location>
</feature>
<feature type="modified residue" description="Phosphoserine" evidence="6">
    <location>
        <position position="343"/>
    </location>
</feature>
<feature type="modified residue" description="Phosphoserine" evidence="1">
    <location>
        <position position="408"/>
    </location>
</feature>
<feature type="modified residue" description="Phosphoserine" evidence="1">
    <location>
        <position position="540"/>
    </location>
</feature>
<feature type="modified residue" description="Phosphoserine" evidence="1">
    <location>
        <position position="634"/>
    </location>
</feature>
<feature type="modified residue" description="Phosphoserine" evidence="1">
    <location>
        <position position="863"/>
    </location>
</feature>
<feature type="mutagenesis site" description="Decreases binding to GRB10." evidence="4">
    <original>W</original>
    <variation>A</variation>
    <location>
        <position position="500"/>
    </location>
</feature>
<feature type="mutagenesis site" description="Decreases binding to GRB10." evidence="4">
    <original>G</original>
    <variation>A</variation>
    <location>
        <position position="504"/>
    </location>
</feature>
<feature type="mutagenesis site" description="Decreases binding to GRB10." evidence="4">
    <original>Y</original>
    <variation>A</variation>
    <location>
        <position position="505"/>
    </location>
</feature>
<feature type="mutagenesis site" description="Abolishes binding to GRB10." evidence="4">
    <original>F</original>
    <variation>A</variation>
    <location>
        <position position="506"/>
    </location>
</feature>
<feature type="sequence conflict" description="In Ref. 2; AAO46886." evidence="5" ref="2">
    <location>
        <position position="58"/>
    </location>
</feature>
<feature type="sequence conflict" description="In Ref. 2; AAO46886." evidence="5" ref="2">
    <original>R</original>
    <variation>K</variation>
    <location>
        <position position="275"/>
    </location>
</feature>
<feature type="sequence conflict" description="In Ref. 2; AAO46886." evidence="5" ref="2">
    <original>S</original>
    <variation>A</variation>
    <location>
        <position position="343"/>
    </location>
</feature>
<feature type="sequence conflict" description="In Ref. 2; AAO46886." evidence="5" ref="2">
    <original>G</original>
    <variation>A</variation>
    <location>
        <position position="404"/>
    </location>
</feature>
<feature type="sequence conflict" description="In Ref. 1; AAK28827." evidence="5" ref="1">
    <original>G</original>
    <variation>S</variation>
    <location>
        <position position="895"/>
    </location>
</feature>
<feature type="sequence conflict" description="In Ref. 1; AAK28827." evidence="5" ref="1">
    <location>
        <begin position="973"/>
        <end position="975"/>
    </location>
</feature>
<proteinExistence type="evidence at protein level"/>
<accession>Q99MR1</accession>
<accession>Q571A0</accession>
<accession>Q6Y7W9</accession>
<name>GGYF1_MOUSE</name>
<keyword id="KW-0597">Phosphoprotein</keyword>
<keyword id="KW-1185">Reference proteome</keyword>
<comment type="function">
    <text evidence="4">May act cooperatively with GRB10 to regulate tyrosine kinase receptor signaling. May increase IGF1 receptor phosphorylation under IGF1 stimulation as well as phosphorylation of IRS1 and SHC1.</text>
</comment>
<comment type="subunit">
    <text evidence="1 4">Interacts with GRB10 (PubMed:12771153). This transient binding is increased under IGF1 stimulation and leads to recruitment of GIGYF1/GRB10 complex to IGF1 receptor (PubMed:12771153). Interacts with DDX6 (By similarity).</text>
</comment>
<comment type="tissue specificity">
    <text evidence="4">Ubiquitous. Lower expression in skeletal muscle, liver and testis.</text>
</comment>
<comment type="similarity">
    <text evidence="5">Belongs to the GIGYF family.</text>
</comment>
<comment type="sequence caution" evidence="5">
    <conflict type="erroneous gene model prediction">
        <sequence resource="EMBL-CDS" id="AAK28827"/>
    </conflict>
</comment>
<protein>
    <recommendedName>
        <fullName>GRB10-interacting GYF protein 1</fullName>
    </recommendedName>
    <alternativeName>
        <fullName>PERQ amino acid-rich with GYF domain-containing protein 1</fullName>
    </alternativeName>
</protein>
<sequence>MAAETLNFGPEWLRALSSGGSVASPPPSPAMPKYKLADYRYGREEMLALYVKENKVPEELQDKEFAAVLQEEPLQPLALEPLTEEEQRNFSLSVNSVAVLRLMGKGAGPPLPATSRGRGSTRSRGRGRGDSCFYQRSIEEGDGAFGRNPREIQRSQSWDDRGERRFEKPARRDGVRSGFEEGGAGPRKEHARSDSENWRSLREEQEDDGSWRLGAGPRRDGDRWRSTSPDGGPRSAGWREHGERRRKFDFDLRGERGGCGEEDGRVGGGNSHLRRCRGLDGFEDDKDGLPEWCLEDEDEEMGTFDASGAFLPLKKGPKEAIPEEQELDFRGLEEEEEEEEEPSEGVDEERPEAGGKEATPLPPPENSSSPSSLPALGPLWTTNEEGGEAVEKELPPAEGDELRGLSLSPRISSPPGPPGDLEDEEGLKHLQQEAEKLVASLQDSSLEEEQFTAAMQTQGLRHSTAATALPLSHGAARKWFYKDPQGEIQGPFTTQEMAEWFQAGYFSMSLLVKRGCDEGFQPLGEVIKMWGRVPFAPGPSPPPLLGNMDQERLKKQQELAAAALYQQLQHQHFLQLVGSRQLPQCTTLREKAAMGDLTPPQQQQLTTFLQQLQALKTPRGGDQNLLPTMSRSLSVPDSGPLWDLHTSASSQSGGEASLWDIPINSSTQGPILEQLQLQHKFQERREVELRAKREEEERKRREEKRRQQQQQQEEQKRRQEEEELFRRKQVRQQELLLKLLQQQQATNVPVPPAPSSPPPLWAGLAKQGLSMKTLLELQMESERQLHKQAAPREPLRAQAPNHRVQLGGLGSAPLNQWVSEAGPLWGGPDKSGGSSGGNLGLWEDTLKSGGSLARSLGLKSSRSSPSLSDSYSHLSGRPVRKKTEEEEKLLKLLQGIPRPQDGFTQWCEQMLHTLSTAGSLDVPMAVAILKEVESPYDVHDYIRSCLGDTLEAKEFAKQFLERRAKQKASQQRQQQQQQQQQQQQEAWLSSTSLQTAFQANHSTKLGPGEGSKAKRRALMLHSDPSILGYSLHGPSGEIESVDDY</sequence>
<dbReference type="EMBL" id="AF312033">
    <property type="protein sequence ID" value="AAK28827.1"/>
    <property type="status" value="ALT_SEQ"/>
    <property type="molecule type" value="Genomic_DNA"/>
</dbReference>
<dbReference type="EMBL" id="AY176042">
    <property type="protein sequence ID" value="AAO46886.1"/>
    <property type="molecule type" value="mRNA"/>
</dbReference>
<dbReference type="EMBL" id="AK220289">
    <property type="protein sequence ID" value="BAD90214.1"/>
    <property type="molecule type" value="mRNA"/>
</dbReference>
<dbReference type="CCDS" id="CCDS51673.1"/>
<dbReference type="RefSeq" id="NP_001390244.1">
    <property type="nucleotide sequence ID" value="NM_001403315.1"/>
</dbReference>
<dbReference type="RefSeq" id="NP_113596.2">
    <property type="nucleotide sequence ID" value="NM_031408.3"/>
</dbReference>
<dbReference type="RefSeq" id="XP_011239256.1">
    <property type="nucleotide sequence ID" value="XM_011240954.1"/>
</dbReference>
<dbReference type="RefSeq" id="XP_036021272.1">
    <property type="nucleotide sequence ID" value="XM_036165379.1"/>
</dbReference>
<dbReference type="SMR" id="Q99MR1"/>
<dbReference type="BioGRID" id="208260">
    <property type="interactions" value="6"/>
</dbReference>
<dbReference type="FunCoup" id="Q99MR1">
    <property type="interactions" value="634"/>
</dbReference>
<dbReference type="IntAct" id="Q99MR1">
    <property type="interactions" value="1"/>
</dbReference>
<dbReference type="MINT" id="Q99MR1"/>
<dbReference type="STRING" id="10090.ENSMUSP00000031727"/>
<dbReference type="iPTMnet" id="Q99MR1"/>
<dbReference type="PhosphoSitePlus" id="Q99MR1"/>
<dbReference type="jPOST" id="Q99MR1"/>
<dbReference type="PaxDb" id="10090-ENSMUSP00000031727"/>
<dbReference type="PeptideAtlas" id="Q99MR1"/>
<dbReference type="ProteomicsDB" id="268875"/>
<dbReference type="Pumba" id="Q99MR1"/>
<dbReference type="Antibodypedia" id="16628">
    <property type="antibodies" value="82 antibodies from 16 providers"/>
</dbReference>
<dbReference type="DNASU" id="57330"/>
<dbReference type="Ensembl" id="ENSMUST00000031727.10">
    <property type="protein sequence ID" value="ENSMUSP00000031727.8"/>
    <property type="gene ID" value="ENSMUSG00000029714.12"/>
</dbReference>
<dbReference type="GeneID" id="57330"/>
<dbReference type="KEGG" id="mmu:57330"/>
<dbReference type="UCSC" id="uc009acp.1">
    <property type="organism name" value="mouse"/>
</dbReference>
<dbReference type="AGR" id="MGI:1888677"/>
<dbReference type="CTD" id="64599"/>
<dbReference type="MGI" id="MGI:1888677">
    <property type="gene designation" value="Gigyf1"/>
</dbReference>
<dbReference type="VEuPathDB" id="HostDB:ENSMUSG00000029714"/>
<dbReference type="eggNOG" id="KOG1862">
    <property type="taxonomic scope" value="Eukaryota"/>
</dbReference>
<dbReference type="GeneTree" id="ENSGT00940000159845"/>
<dbReference type="HOGENOM" id="CLU_007300_0_0_1"/>
<dbReference type="InParanoid" id="Q99MR1"/>
<dbReference type="OMA" id="FHNTGEC"/>
<dbReference type="OrthoDB" id="48509at2759"/>
<dbReference type="PhylomeDB" id="Q99MR1"/>
<dbReference type="TreeFam" id="TF325513"/>
<dbReference type="BioGRID-ORCS" id="57330">
    <property type="hits" value="8 hits in 77 CRISPR screens"/>
</dbReference>
<dbReference type="ChiTaRS" id="Gigyf1">
    <property type="organism name" value="mouse"/>
</dbReference>
<dbReference type="PRO" id="PR:Q99MR1"/>
<dbReference type="Proteomes" id="UP000000589">
    <property type="component" value="Chromosome 5"/>
</dbReference>
<dbReference type="RNAct" id="Q99MR1">
    <property type="molecule type" value="protein"/>
</dbReference>
<dbReference type="Bgee" id="ENSMUSG00000029714">
    <property type="expression patterns" value="Expressed in olfactory tubercle and 248 other cell types or tissues"/>
</dbReference>
<dbReference type="ExpressionAtlas" id="Q99MR1">
    <property type="expression patterns" value="baseline and differential"/>
</dbReference>
<dbReference type="GO" id="GO:0032991">
    <property type="term" value="C:protein-containing complex"/>
    <property type="evidence" value="ECO:0007669"/>
    <property type="project" value="Ensembl"/>
</dbReference>
<dbReference type="GO" id="GO:0048009">
    <property type="term" value="P:insulin-like growth factor receptor signaling pathway"/>
    <property type="evidence" value="ECO:0000353"/>
    <property type="project" value="MGI"/>
</dbReference>
<dbReference type="CDD" id="cd00072">
    <property type="entry name" value="GYF"/>
    <property type="match status" value="1"/>
</dbReference>
<dbReference type="FunFam" id="3.30.1490.40:FF:000001">
    <property type="entry name" value="GRB10-interacting GYF protein 2 isoform X1"/>
    <property type="match status" value="1"/>
</dbReference>
<dbReference type="Gene3D" id="3.30.1490.40">
    <property type="match status" value="1"/>
</dbReference>
<dbReference type="InterPro" id="IPR051640">
    <property type="entry name" value="GRB10-interact_GYF"/>
</dbReference>
<dbReference type="InterPro" id="IPR003169">
    <property type="entry name" value="GYF"/>
</dbReference>
<dbReference type="InterPro" id="IPR035445">
    <property type="entry name" value="GYF-like_dom_sf"/>
</dbReference>
<dbReference type="PANTHER" id="PTHR14445">
    <property type="entry name" value="GRB10 INTERACTING GYF PROTEIN"/>
    <property type="match status" value="1"/>
</dbReference>
<dbReference type="PANTHER" id="PTHR14445:SF37">
    <property type="entry name" value="GRB10-INTERACTING GYF PROTEIN 1"/>
    <property type="match status" value="1"/>
</dbReference>
<dbReference type="Pfam" id="PF02213">
    <property type="entry name" value="GYF"/>
    <property type="match status" value="1"/>
</dbReference>
<dbReference type="SMART" id="SM00444">
    <property type="entry name" value="GYF"/>
    <property type="match status" value="1"/>
</dbReference>
<dbReference type="SUPFAM" id="SSF55277">
    <property type="entry name" value="GYF domain"/>
    <property type="match status" value="1"/>
</dbReference>
<dbReference type="PROSITE" id="PS50829">
    <property type="entry name" value="GYF"/>
    <property type="match status" value="1"/>
</dbReference>
<reference key="1">
    <citation type="journal article" date="2001" name="Nucleic Acids Res.">
        <title>Comparative analysis of the gene-dense ACHE/TFR2 region on human chromosome 7q22 with the orthologous region on mouse chromosome 5.</title>
        <authorList>
            <person name="Wilson M.D."/>
            <person name="Riemer C."/>
            <person name="Martindale D.W."/>
            <person name="Schnupf P."/>
            <person name="Boright A.P."/>
            <person name="Cheung T.L."/>
            <person name="Hardy D.M."/>
            <person name="Schwartz S."/>
            <person name="Scherer S.W."/>
            <person name="Tsui L.-C."/>
            <person name="Miller W."/>
            <person name="Koop B.F."/>
        </authorList>
    </citation>
    <scope>NUCLEOTIDE SEQUENCE [GENOMIC DNA]</scope>
    <source>
        <strain>129/Sv</strain>
    </source>
</reference>
<reference key="2">
    <citation type="journal article" date="2003" name="J. Biol. Chem.">
        <title>Two novel proteins that are linked to insulin-like growth factor (IGF-I) receptors by the Grb10 adapter and modulate IGF-I signaling.</title>
        <authorList>
            <person name="Giovannone B."/>
            <person name="Lee E."/>
            <person name="Laviola L."/>
            <person name="Giorgino F."/>
            <person name="Cleveland K.A."/>
            <person name="Smith R.J."/>
        </authorList>
    </citation>
    <scope>NUCLEOTIDE SEQUENCE [MRNA]</scope>
    <scope>TISSUE SPECIFICITY</scope>
    <scope>INTERACTION WITH GRB10</scope>
    <scope>MUTAGENESIS OF TRP-500; GLY-504; TYR-505 AND PHE-506</scope>
    <scope>FUNCTION</scope>
    <source>
        <strain>C57BL/6J</strain>
        <tissue>Lung</tissue>
    </source>
</reference>
<reference key="3">
    <citation type="submission" date="2005-02" db="EMBL/GenBank/DDBJ databases">
        <title>Prediction of the coding sequences of mouse homologues of KIAA gene. The complete nucleotide sequences of mouse KIAA-homologous cDNAs identified by screening of terminal sequences of cDNA clones randomly sampled from size-fractionated libraries.</title>
        <authorList>
            <person name="Okazaki N."/>
            <person name="Kikuno R.F."/>
            <person name="Ohara R."/>
            <person name="Inamoto S."/>
            <person name="Nagase T."/>
            <person name="Ohara O."/>
            <person name="Koga H."/>
        </authorList>
    </citation>
    <scope>NUCLEOTIDE SEQUENCE [LARGE SCALE MRNA] OF 308-1041</scope>
    <source>
        <tissue>Pancreatic islet</tissue>
    </source>
</reference>
<reference key="4">
    <citation type="journal article" date="2006" name="Mol. Cell. Proteomics">
        <title>Comprehensive identification of phosphorylation sites in postsynaptic density preparations.</title>
        <authorList>
            <person name="Trinidad J.C."/>
            <person name="Specht C.G."/>
            <person name="Thalhammer A."/>
            <person name="Schoepfer R."/>
            <person name="Burlingame A.L."/>
        </authorList>
    </citation>
    <scope>IDENTIFICATION BY MASS SPECTROMETRY [LARGE SCALE ANALYSIS]</scope>
    <source>
        <tissue>Brain</tissue>
    </source>
</reference>
<reference key="5">
    <citation type="journal article" date="2010" name="Cell">
        <title>A tissue-specific atlas of mouse protein phosphorylation and expression.</title>
        <authorList>
            <person name="Huttlin E.L."/>
            <person name="Jedrychowski M.P."/>
            <person name="Elias J.E."/>
            <person name="Goswami T."/>
            <person name="Rad R."/>
            <person name="Beausoleil S.A."/>
            <person name="Villen J."/>
            <person name="Haas W."/>
            <person name="Sowa M.E."/>
            <person name="Gygi S.P."/>
        </authorList>
    </citation>
    <scope>PHOSPHORYLATION [LARGE SCALE ANALYSIS] AT SER-24; SER-28; SER-137 AND SER-343</scope>
    <scope>IDENTIFICATION BY MASS SPECTROMETRY [LARGE SCALE ANALYSIS]</scope>
    <source>
        <tissue>Brain</tissue>
        <tissue>Heart</tissue>
        <tissue>Liver</tissue>
        <tissue>Lung</tissue>
        <tissue>Spleen</tissue>
        <tissue>Testis</tissue>
    </source>
</reference>